<sequence>MASPKHFLDLSAVGPQDLRTILDDARARKVATKAGTAEKPLAGKMLAMIFEKPSTRTRVSFDVGMRQLGGETLFLSGTEMQLGRAETIGDTAKVLSRYVDAIMIRTTDHSRLLELAEHATVPVINGLTDDTHPCQIMADIMTFEEHRGPVKGKTIAWTGDGNNVLHSFVEGSARFGYRMTMAVPMGSEPHDKFMNWARNNGGEIALYHDADKAVAGADCVVTDTWVSMNQEHKARGHNIFQPYQVNEALMAKAQKDALFMHCLPAHRGEEVTDAVIDGPQSVVFDEAENRLHAQKSVIAWCMGVI</sequence>
<keyword id="KW-0028">Amino-acid biosynthesis</keyword>
<keyword id="KW-0055">Arginine biosynthesis</keyword>
<keyword id="KW-0963">Cytoplasm</keyword>
<keyword id="KW-1185">Reference proteome</keyword>
<keyword id="KW-0808">Transferase</keyword>
<gene>
    <name evidence="2" type="primary">argF</name>
    <name type="ordered locus">Atu0429</name>
    <name type="ORF">AGR_C_755</name>
</gene>
<accession>Q8UI70</accession>
<proteinExistence type="inferred from homology"/>
<organism>
    <name type="scientific">Agrobacterium fabrum (strain C58 / ATCC 33970)</name>
    <name type="common">Agrobacterium tumefaciens (strain C58)</name>
    <dbReference type="NCBI Taxonomy" id="176299"/>
    <lineage>
        <taxon>Bacteria</taxon>
        <taxon>Pseudomonadati</taxon>
        <taxon>Pseudomonadota</taxon>
        <taxon>Alphaproteobacteria</taxon>
        <taxon>Hyphomicrobiales</taxon>
        <taxon>Rhizobiaceae</taxon>
        <taxon>Rhizobium/Agrobacterium group</taxon>
        <taxon>Agrobacterium</taxon>
        <taxon>Agrobacterium tumefaciens complex</taxon>
    </lineage>
</organism>
<protein>
    <recommendedName>
        <fullName evidence="2">Ornithine carbamoyltransferase</fullName>
        <shortName evidence="2">OTCase</shortName>
        <ecNumber evidence="2">2.1.3.3</ecNumber>
    </recommendedName>
</protein>
<comment type="function">
    <text evidence="1">Reversibly catalyzes the transfer of the carbamoyl group from carbamoyl phosphate (CP) to the N(epsilon) atom of ornithine (ORN) to produce L-citrulline.</text>
</comment>
<comment type="catalytic activity">
    <reaction evidence="2">
        <text>carbamoyl phosphate + L-ornithine = L-citrulline + phosphate + H(+)</text>
        <dbReference type="Rhea" id="RHEA:19513"/>
        <dbReference type="ChEBI" id="CHEBI:15378"/>
        <dbReference type="ChEBI" id="CHEBI:43474"/>
        <dbReference type="ChEBI" id="CHEBI:46911"/>
        <dbReference type="ChEBI" id="CHEBI:57743"/>
        <dbReference type="ChEBI" id="CHEBI:58228"/>
        <dbReference type="EC" id="2.1.3.3"/>
    </reaction>
</comment>
<comment type="pathway">
    <text evidence="2">Amino-acid biosynthesis; L-arginine biosynthesis; L-arginine from L-ornithine and carbamoyl phosphate: step 1/3.</text>
</comment>
<comment type="subcellular location">
    <subcellularLocation>
        <location evidence="2">Cytoplasm</location>
    </subcellularLocation>
</comment>
<comment type="similarity">
    <text evidence="2">Belongs to the aspartate/ornithine carbamoyltransferase superfamily. OTCase family.</text>
</comment>
<evidence type="ECO:0000250" key="1"/>
<evidence type="ECO:0000255" key="2">
    <source>
        <dbReference type="HAMAP-Rule" id="MF_01109"/>
    </source>
</evidence>
<reference key="1">
    <citation type="journal article" date="2001" name="Science">
        <title>The genome of the natural genetic engineer Agrobacterium tumefaciens C58.</title>
        <authorList>
            <person name="Wood D.W."/>
            <person name="Setubal J.C."/>
            <person name="Kaul R."/>
            <person name="Monks D.E."/>
            <person name="Kitajima J.P."/>
            <person name="Okura V.K."/>
            <person name="Zhou Y."/>
            <person name="Chen L."/>
            <person name="Wood G.E."/>
            <person name="Almeida N.F. Jr."/>
            <person name="Woo L."/>
            <person name="Chen Y."/>
            <person name="Paulsen I.T."/>
            <person name="Eisen J.A."/>
            <person name="Karp P.D."/>
            <person name="Bovee D. Sr."/>
            <person name="Chapman P."/>
            <person name="Clendenning J."/>
            <person name="Deatherage G."/>
            <person name="Gillet W."/>
            <person name="Grant C."/>
            <person name="Kutyavin T."/>
            <person name="Levy R."/>
            <person name="Li M.-J."/>
            <person name="McClelland E."/>
            <person name="Palmieri A."/>
            <person name="Raymond C."/>
            <person name="Rouse G."/>
            <person name="Saenphimmachak C."/>
            <person name="Wu Z."/>
            <person name="Romero P."/>
            <person name="Gordon D."/>
            <person name="Zhang S."/>
            <person name="Yoo H."/>
            <person name="Tao Y."/>
            <person name="Biddle P."/>
            <person name="Jung M."/>
            <person name="Krespan W."/>
            <person name="Perry M."/>
            <person name="Gordon-Kamm B."/>
            <person name="Liao L."/>
            <person name="Kim S."/>
            <person name="Hendrick C."/>
            <person name="Zhao Z.-Y."/>
            <person name="Dolan M."/>
            <person name="Chumley F."/>
            <person name="Tingey S.V."/>
            <person name="Tomb J.-F."/>
            <person name="Gordon M.P."/>
            <person name="Olson M.V."/>
            <person name="Nester E.W."/>
        </authorList>
    </citation>
    <scope>NUCLEOTIDE SEQUENCE [LARGE SCALE GENOMIC DNA]</scope>
    <source>
        <strain>C58 / ATCC 33970</strain>
    </source>
</reference>
<reference key="2">
    <citation type="journal article" date="2001" name="Science">
        <title>Genome sequence of the plant pathogen and biotechnology agent Agrobacterium tumefaciens C58.</title>
        <authorList>
            <person name="Goodner B."/>
            <person name="Hinkle G."/>
            <person name="Gattung S."/>
            <person name="Miller N."/>
            <person name="Blanchard M."/>
            <person name="Qurollo B."/>
            <person name="Goldman B.S."/>
            <person name="Cao Y."/>
            <person name="Askenazi M."/>
            <person name="Halling C."/>
            <person name="Mullin L."/>
            <person name="Houmiel K."/>
            <person name="Gordon J."/>
            <person name="Vaudin M."/>
            <person name="Iartchouk O."/>
            <person name="Epp A."/>
            <person name="Liu F."/>
            <person name="Wollam C."/>
            <person name="Allinger M."/>
            <person name="Doughty D."/>
            <person name="Scott C."/>
            <person name="Lappas C."/>
            <person name="Markelz B."/>
            <person name="Flanagan C."/>
            <person name="Crowell C."/>
            <person name="Gurson J."/>
            <person name="Lomo C."/>
            <person name="Sear C."/>
            <person name="Strub G."/>
            <person name="Cielo C."/>
            <person name="Slater S."/>
        </authorList>
    </citation>
    <scope>NUCLEOTIDE SEQUENCE [LARGE SCALE GENOMIC DNA]</scope>
    <source>
        <strain>C58 / ATCC 33970</strain>
    </source>
</reference>
<dbReference type="EC" id="2.1.3.3" evidence="2"/>
<dbReference type="EMBL" id="AE007869">
    <property type="protein sequence ID" value="AAK86242.1"/>
    <property type="molecule type" value="Genomic_DNA"/>
</dbReference>
<dbReference type="PIR" id="A97411">
    <property type="entry name" value="A97411"/>
</dbReference>
<dbReference type="PIR" id="AC2629">
    <property type="entry name" value="AC2629"/>
</dbReference>
<dbReference type="RefSeq" id="NP_353457.1">
    <property type="nucleotide sequence ID" value="NC_003062.2"/>
</dbReference>
<dbReference type="RefSeq" id="WP_010970889.1">
    <property type="nucleotide sequence ID" value="NC_003062.2"/>
</dbReference>
<dbReference type="SMR" id="Q8UI70"/>
<dbReference type="STRING" id="176299.Atu0429"/>
<dbReference type="EnsemblBacteria" id="AAK86242">
    <property type="protein sequence ID" value="AAK86242"/>
    <property type="gene ID" value="Atu0429"/>
</dbReference>
<dbReference type="GeneID" id="1132467"/>
<dbReference type="KEGG" id="atu:Atu0429"/>
<dbReference type="PATRIC" id="fig|176299.10.peg.419"/>
<dbReference type="eggNOG" id="COG0078">
    <property type="taxonomic scope" value="Bacteria"/>
</dbReference>
<dbReference type="HOGENOM" id="CLU_043846_3_2_5"/>
<dbReference type="OrthoDB" id="9802587at2"/>
<dbReference type="PhylomeDB" id="Q8UI70"/>
<dbReference type="BioCyc" id="AGRO:ATU0429-MONOMER"/>
<dbReference type="SABIO-RK" id="Q8UI70"/>
<dbReference type="UniPathway" id="UPA00068">
    <property type="reaction ID" value="UER00112"/>
</dbReference>
<dbReference type="Proteomes" id="UP000000813">
    <property type="component" value="Chromosome circular"/>
</dbReference>
<dbReference type="GO" id="GO:0005737">
    <property type="term" value="C:cytoplasm"/>
    <property type="evidence" value="ECO:0007669"/>
    <property type="project" value="UniProtKB-SubCell"/>
</dbReference>
<dbReference type="GO" id="GO:0016597">
    <property type="term" value="F:amino acid binding"/>
    <property type="evidence" value="ECO:0007669"/>
    <property type="project" value="InterPro"/>
</dbReference>
<dbReference type="GO" id="GO:0004585">
    <property type="term" value="F:ornithine carbamoyltransferase activity"/>
    <property type="evidence" value="ECO:0007669"/>
    <property type="project" value="UniProtKB-UniRule"/>
</dbReference>
<dbReference type="GO" id="GO:0042450">
    <property type="term" value="P:arginine biosynthetic process via ornithine"/>
    <property type="evidence" value="ECO:0007669"/>
    <property type="project" value="TreeGrafter"/>
</dbReference>
<dbReference type="GO" id="GO:0019240">
    <property type="term" value="P:citrulline biosynthetic process"/>
    <property type="evidence" value="ECO:0007669"/>
    <property type="project" value="TreeGrafter"/>
</dbReference>
<dbReference type="GO" id="GO:0006526">
    <property type="term" value="P:L-arginine biosynthetic process"/>
    <property type="evidence" value="ECO:0007669"/>
    <property type="project" value="UniProtKB-UniRule"/>
</dbReference>
<dbReference type="FunFam" id="3.40.50.1370:FF:000008">
    <property type="entry name" value="Ornithine carbamoyltransferase"/>
    <property type="match status" value="1"/>
</dbReference>
<dbReference type="Gene3D" id="3.40.50.1370">
    <property type="entry name" value="Aspartate/ornithine carbamoyltransferase"/>
    <property type="match status" value="2"/>
</dbReference>
<dbReference type="HAMAP" id="MF_01109">
    <property type="entry name" value="OTCase"/>
    <property type="match status" value="1"/>
</dbReference>
<dbReference type="InterPro" id="IPR006132">
    <property type="entry name" value="Asp/Orn_carbamoyltranf_P-bd"/>
</dbReference>
<dbReference type="InterPro" id="IPR006130">
    <property type="entry name" value="Asp/Orn_carbamoylTrfase"/>
</dbReference>
<dbReference type="InterPro" id="IPR036901">
    <property type="entry name" value="Asp/Orn_carbamoylTrfase_sf"/>
</dbReference>
<dbReference type="InterPro" id="IPR006131">
    <property type="entry name" value="Asp_carbamoyltransf_Asp/Orn-bd"/>
</dbReference>
<dbReference type="InterPro" id="IPR002292">
    <property type="entry name" value="Orn/put_carbamltrans"/>
</dbReference>
<dbReference type="InterPro" id="IPR024904">
    <property type="entry name" value="OTCase_ArgI"/>
</dbReference>
<dbReference type="NCBIfam" id="TIGR00658">
    <property type="entry name" value="orni_carb_tr"/>
    <property type="match status" value="1"/>
</dbReference>
<dbReference type="NCBIfam" id="NF001986">
    <property type="entry name" value="PRK00779.1"/>
    <property type="match status" value="1"/>
</dbReference>
<dbReference type="PANTHER" id="PTHR45753">
    <property type="entry name" value="ORNITHINE CARBAMOYLTRANSFERASE, MITOCHONDRIAL"/>
    <property type="match status" value="1"/>
</dbReference>
<dbReference type="PANTHER" id="PTHR45753:SF3">
    <property type="entry name" value="ORNITHINE TRANSCARBAMYLASE, MITOCHONDRIAL"/>
    <property type="match status" value="1"/>
</dbReference>
<dbReference type="Pfam" id="PF00185">
    <property type="entry name" value="OTCace"/>
    <property type="match status" value="1"/>
</dbReference>
<dbReference type="Pfam" id="PF02729">
    <property type="entry name" value="OTCace_N"/>
    <property type="match status" value="1"/>
</dbReference>
<dbReference type="PRINTS" id="PR00100">
    <property type="entry name" value="AOTCASE"/>
</dbReference>
<dbReference type="PRINTS" id="PR00102">
    <property type="entry name" value="OTCASE"/>
</dbReference>
<dbReference type="SUPFAM" id="SSF53671">
    <property type="entry name" value="Aspartate/ornithine carbamoyltransferase"/>
    <property type="match status" value="1"/>
</dbReference>
<dbReference type="PROSITE" id="PS00097">
    <property type="entry name" value="CARBAMOYLTRANSFERASE"/>
    <property type="match status" value="1"/>
</dbReference>
<name>OTC_AGRFC</name>
<feature type="chain" id="PRO_0000112872" description="Ornithine carbamoyltransferase">
    <location>
        <begin position="1"/>
        <end position="305"/>
    </location>
</feature>
<feature type="binding site" evidence="2">
    <location>
        <begin position="54"/>
        <end position="57"/>
    </location>
    <ligand>
        <name>carbamoyl phosphate</name>
        <dbReference type="ChEBI" id="CHEBI:58228"/>
    </ligand>
</feature>
<feature type="binding site" evidence="2">
    <location>
        <position position="81"/>
    </location>
    <ligand>
        <name>carbamoyl phosphate</name>
        <dbReference type="ChEBI" id="CHEBI:58228"/>
    </ligand>
</feature>
<feature type="binding site" evidence="2">
    <location>
        <position position="105"/>
    </location>
    <ligand>
        <name>carbamoyl phosphate</name>
        <dbReference type="ChEBI" id="CHEBI:58228"/>
    </ligand>
</feature>
<feature type="binding site" evidence="2">
    <location>
        <begin position="132"/>
        <end position="135"/>
    </location>
    <ligand>
        <name>carbamoyl phosphate</name>
        <dbReference type="ChEBI" id="CHEBI:58228"/>
    </ligand>
</feature>
<feature type="binding site" evidence="2">
    <location>
        <position position="163"/>
    </location>
    <ligand>
        <name>L-ornithine</name>
        <dbReference type="ChEBI" id="CHEBI:46911"/>
    </ligand>
</feature>
<feature type="binding site" evidence="2">
    <location>
        <position position="223"/>
    </location>
    <ligand>
        <name>L-ornithine</name>
        <dbReference type="ChEBI" id="CHEBI:46911"/>
    </ligand>
</feature>
<feature type="binding site" evidence="2">
    <location>
        <begin position="227"/>
        <end position="228"/>
    </location>
    <ligand>
        <name>L-ornithine</name>
        <dbReference type="ChEBI" id="CHEBI:46911"/>
    </ligand>
</feature>
<feature type="binding site" evidence="2">
    <location>
        <begin position="262"/>
        <end position="263"/>
    </location>
    <ligand>
        <name>carbamoyl phosphate</name>
        <dbReference type="ChEBI" id="CHEBI:58228"/>
    </ligand>
</feature>
<feature type="binding site" evidence="2">
    <location>
        <position position="290"/>
    </location>
    <ligand>
        <name>carbamoyl phosphate</name>
        <dbReference type="ChEBI" id="CHEBI:58228"/>
    </ligand>
</feature>